<protein>
    <recommendedName>
        <fullName evidence="1">Hydroxyacylglutathione hydrolase</fullName>
        <ecNumber evidence="1">3.1.2.6</ecNumber>
    </recommendedName>
    <alternativeName>
        <fullName evidence="1">Glyoxalase II</fullName>
        <shortName evidence="1">Glx II</shortName>
    </alternativeName>
</protein>
<evidence type="ECO:0000255" key="1">
    <source>
        <dbReference type="HAMAP-Rule" id="MF_01374"/>
    </source>
</evidence>
<reference key="1">
    <citation type="journal article" date="2002" name="Nat. Biotechnol.">
        <title>Genome sequence of the dissimilatory metal ion-reducing bacterium Shewanella oneidensis.</title>
        <authorList>
            <person name="Heidelberg J.F."/>
            <person name="Paulsen I.T."/>
            <person name="Nelson K.E."/>
            <person name="Gaidos E.J."/>
            <person name="Nelson W.C."/>
            <person name="Read T.D."/>
            <person name="Eisen J.A."/>
            <person name="Seshadri R."/>
            <person name="Ward N.L."/>
            <person name="Methe B.A."/>
            <person name="Clayton R.A."/>
            <person name="Meyer T."/>
            <person name="Tsapin A."/>
            <person name="Scott J."/>
            <person name="Beanan M.J."/>
            <person name="Brinkac L.M."/>
            <person name="Daugherty S.C."/>
            <person name="DeBoy R.T."/>
            <person name="Dodson R.J."/>
            <person name="Durkin A.S."/>
            <person name="Haft D.H."/>
            <person name="Kolonay J.F."/>
            <person name="Madupu R."/>
            <person name="Peterson J.D."/>
            <person name="Umayam L.A."/>
            <person name="White O."/>
            <person name="Wolf A.M."/>
            <person name="Vamathevan J.J."/>
            <person name="Weidman J.F."/>
            <person name="Impraim M."/>
            <person name="Lee K."/>
            <person name="Berry K.J."/>
            <person name="Lee C."/>
            <person name="Mueller J."/>
            <person name="Khouri H.M."/>
            <person name="Gill J."/>
            <person name="Utterback T.R."/>
            <person name="McDonald L.A."/>
            <person name="Feldblyum T.V."/>
            <person name="Smith H.O."/>
            <person name="Venter J.C."/>
            <person name="Nealson K.H."/>
            <person name="Fraser C.M."/>
        </authorList>
    </citation>
    <scope>NUCLEOTIDE SEQUENCE [LARGE SCALE GENOMIC DNA]</scope>
    <source>
        <strain>ATCC 700550 / JCM 31522 / CIP 106686 / LMG 19005 / NCIMB 14063 / MR-1</strain>
    </source>
</reference>
<proteinExistence type="inferred from homology"/>
<keyword id="KW-0378">Hydrolase</keyword>
<keyword id="KW-0479">Metal-binding</keyword>
<keyword id="KW-1185">Reference proteome</keyword>
<keyword id="KW-0862">Zinc</keyword>
<feature type="chain" id="PRO_1000144809" description="Hydroxyacylglutathione hydrolase">
    <location>
        <begin position="1"/>
        <end position="267"/>
    </location>
</feature>
<feature type="binding site" evidence="1">
    <location>
        <position position="55"/>
    </location>
    <ligand>
        <name>Zn(2+)</name>
        <dbReference type="ChEBI" id="CHEBI:29105"/>
        <label>1</label>
    </ligand>
</feature>
<feature type="binding site" evidence="1">
    <location>
        <position position="57"/>
    </location>
    <ligand>
        <name>Zn(2+)</name>
        <dbReference type="ChEBI" id="CHEBI:29105"/>
        <label>1</label>
    </ligand>
</feature>
<feature type="binding site" evidence="1">
    <location>
        <position position="59"/>
    </location>
    <ligand>
        <name>Zn(2+)</name>
        <dbReference type="ChEBI" id="CHEBI:29105"/>
        <label>2</label>
    </ligand>
</feature>
<feature type="binding site" evidence="1">
    <location>
        <position position="60"/>
    </location>
    <ligand>
        <name>Zn(2+)</name>
        <dbReference type="ChEBI" id="CHEBI:29105"/>
        <label>2</label>
    </ligand>
</feature>
<feature type="binding site" evidence="1">
    <location>
        <position position="121"/>
    </location>
    <ligand>
        <name>Zn(2+)</name>
        <dbReference type="ChEBI" id="CHEBI:29105"/>
        <label>1</label>
    </ligand>
</feature>
<feature type="binding site" evidence="1">
    <location>
        <position position="138"/>
    </location>
    <ligand>
        <name>Zn(2+)</name>
        <dbReference type="ChEBI" id="CHEBI:29105"/>
        <label>1</label>
    </ligand>
</feature>
<feature type="binding site" evidence="1">
    <location>
        <position position="138"/>
    </location>
    <ligand>
        <name>Zn(2+)</name>
        <dbReference type="ChEBI" id="CHEBI:29105"/>
        <label>2</label>
    </ligand>
</feature>
<feature type="binding site" evidence="1">
    <location>
        <position position="176"/>
    </location>
    <ligand>
        <name>Zn(2+)</name>
        <dbReference type="ChEBI" id="CHEBI:29105"/>
        <label>2</label>
    </ligand>
</feature>
<sequence length="267" mass="29167">MLTITAINAFNDNYIWVLQQDTQQAVYVVDPGDVNVVLDYLNAHQLTLAGILITHHHRDHTGGIAALVAYVEQTTGHTLAVYGPQSEAIQGVNIAIEPQITQILHLPFLNSPVQVLSVPGHTAGHIAYLVDGALFCGDTLFSGGCGRLFEGTPAQMCHSLRLLAALPAETRVYCAHEYTLANLKFAQAADPSNAKLKAYNEQATALRAQGKATIPSTIGLERSINPFLRGLTPTIVDSIKQQFCDQDLSNVDELTYFTLLRQWKDIF</sequence>
<comment type="function">
    <text evidence="1">Thiolesterase that catalyzes the hydrolysis of S-D-lactoyl-glutathione to form glutathione and D-lactic acid.</text>
</comment>
<comment type="catalytic activity">
    <reaction evidence="1">
        <text>an S-(2-hydroxyacyl)glutathione + H2O = a 2-hydroxy carboxylate + glutathione + H(+)</text>
        <dbReference type="Rhea" id="RHEA:21864"/>
        <dbReference type="ChEBI" id="CHEBI:15377"/>
        <dbReference type="ChEBI" id="CHEBI:15378"/>
        <dbReference type="ChEBI" id="CHEBI:57925"/>
        <dbReference type="ChEBI" id="CHEBI:58896"/>
        <dbReference type="ChEBI" id="CHEBI:71261"/>
        <dbReference type="EC" id="3.1.2.6"/>
    </reaction>
</comment>
<comment type="cofactor">
    <cofactor evidence="1">
        <name>Zn(2+)</name>
        <dbReference type="ChEBI" id="CHEBI:29105"/>
    </cofactor>
    <text evidence="1">Binds 2 Zn(2+) ions per subunit.</text>
</comment>
<comment type="pathway">
    <text evidence="1">Secondary metabolite metabolism; methylglyoxal degradation; (R)-lactate from methylglyoxal: step 2/2.</text>
</comment>
<comment type="subunit">
    <text evidence="1">Monomer.</text>
</comment>
<comment type="similarity">
    <text evidence="1">Belongs to the metallo-beta-lactamase superfamily. Glyoxalase II family.</text>
</comment>
<organism>
    <name type="scientific">Shewanella oneidensis (strain ATCC 700550 / JCM 31522 / CIP 106686 / LMG 19005 / NCIMB 14063 / MR-1)</name>
    <dbReference type="NCBI Taxonomy" id="211586"/>
    <lineage>
        <taxon>Bacteria</taxon>
        <taxon>Pseudomonadati</taxon>
        <taxon>Pseudomonadota</taxon>
        <taxon>Gammaproteobacteria</taxon>
        <taxon>Alteromonadales</taxon>
        <taxon>Shewanellaceae</taxon>
        <taxon>Shewanella</taxon>
    </lineage>
</organism>
<gene>
    <name evidence="1" type="primary">gloB</name>
    <name type="ordered locus">SO_2563</name>
</gene>
<dbReference type="EC" id="3.1.2.6" evidence="1"/>
<dbReference type="EMBL" id="AE014299">
    <property type="protein sequence ID" value="AAN55593.1"/>
    <property type="molecule type" value="Genomic_DNA"/>
</dbReference>
<dbReference type="RefSeq" id="NP_718149.1">
    <property type="nucleotide sequence ID" value="NC_004347.2"/>
</dbReference>
<dbReference type="RefSeq" id="WP_011072516.1">
    <property type="nucleotide sequence ID" value="NC_004347.2"/>
</dbReference>
<dbReference type="SMR" id="Q8EE27"/>
<dbReference type="STRING" id="211586.SO_2563"/>
<dbReference type="PaxDb" id="211586-SO_2563"/>
<dbReference type="KEGG" id="son:SO_2563"/>
<dbReference type="PATRIC" id="fig|1028802.3.peg.1372"/>
<dbReference type="eggNOG" id="COG0491">
    <property type="taxonomic scope" value="Bacteria"/>
</dbReference>
<dbReference type="HOGENOM" id="CLU_030571_4_1_6"/>
<dbReference type="OrthoDB" id="9802248at2"/>
<dbReference type="PhylomeDB" id="Q8EE27"/>
<dbReference type="BioCyc" id="SONE211586:G1GMP-2350-MONOMER"/>
<dbReference type="UniPathway" id="UPA00619">
    <property type="reaction ID" value="UER00676"/>
</dbReference>
<dbReference type="Proteomes" id="UP000008186">
    <property type="component" value="Chromosome"/>
</dbReference>
<dbReference type="GO" id="GO:0004416">
    <property type="term" value="F:hydroxyacylglutathione hydrolase activity"/>
    <property type="evidence" value="ECO:0007669"/>
    <property type="project" value="UniProtKB-UniRule"/>
</dbReference>
<dbReference type="GO" id="GO:0046872">
    <property type="term" value="F:metal ion binding"/>
    <property type="evidence" value="ECO:0007669"/>
    <property type="project" value="UniProtKB-KW"/>
</dbReference>
<dbReference type="GO" id="GO:0019243">
    <property type="term" value="P:methylglyoxal catabolic process to D-lactate via S-lactoyl-glutathione"/>
    <property type="evidence" value="ECO:0007669"/>
    <property type="project" value="InterPro"/>
</dbReference>
<dbReference type="CDD" id="cd07723">
    <property type="entry name" value="hydroxyacylglutathione_hydrolase_MBL-fold"/>
    <property type="match status" value="1"/>
</dbReference>
<dbReference type="Gene3D" id="3.60.15.10">
    <property type="entry name" value="Ribonuclease Z/Hydroxyacylglutathione hydrolase-like"/>
    <property type="match status" value="1"/>
</dbReference>
<dbReference type="HAMAP" id="MF_01374">
    <property type="entry name" value="Glyoxalase_2"/>
    <property type="match status" value="1"/>
</dbReference>
<dbReference type="InterPro" id="IPR035680">
    <property type="entry name" value="Clx_II_MBL"/>
</dbReference>
<dbReference type="InterPro" id="IPR050110">
    <property type="entry name" value="Glyoxalase_II_hydrolase"/>
</dbReference>
<dbReference type="InterPro" id="IPR032282">
    <property type="entry name" value="HAGH_C"/>
</dbReference>
<dbReference type="InterPro" id="IPR017782">
    <property type="entry name" value="Hydroxyacylglutathione_Hdrlase"/>
</dbReference>
<dbReference type="InterPro" id="IPR001279">
    <property type="entry name" value="Metallo-B-lactamas"/>
</dbReference>
<dbReference type="InterPro" id="IPR036866">
    <property type="entry name" value="RibonucZ/Hydroxyglut_hydro"/>
</dbReference>
<dbReference type="NCBIfam" id="TIGR03413">
    <property type="entry name" value="GSH_gloB"/>
    <property type="match status" value="1"/>
</dbReference>
<dbReference type="PANTHER" id="PTHR43705">
    <property type="entry name" value="HYDROXYACYLGLUTATHIONE HYDROLASE"/>
    <property type="match status" value="1"/>
</dbReference>
<dbReference type="PANTHER" id="PTHR43705:SF1">
    <property type="entry name" value="HYDROXYACYLGLUTATHIONE HYDROLASE GLOB"/>
    <property type="match status" value="1"/>
</dbReference>
<dbReference type="Pfam" id="PF16123">
    <property type="entry name" value="HAGH_C"/>
    <property type="match status" value="1"/>
</dbReference>
<dbReference type="Pfam" id="PF00753">
    <property type="entry name" value="Lactamase_B"/>
    <property type="match status" value="1"/>
</dbReference>
<dbReference type="PIRSF" id="PIRSF005457">
    <property type="entry name" value="Glx"/>
    <property type="match status" value="1"/>
</dbReference>
<dbReference type="SMART" id="SM00849">
    <property type="entry name" value="Lactamase_B"/>
    <property type="match status" value="1"/>
</dbReference>
<dbReference type="SUPFAM" id="SSF56281">
    <property type="entry name" value="Metallo-hydrolase/oxidoreductase"/>
    <property type="match status" value="1"/>
</dbReference>
<name>GLO2_SHEON</name>
<accession>Q8EE27</accession>